<reference key="1">
    <citation type="submission" date="2005-08" db="EMBL/GenBank/DDBJ databases">
        <title>Complete sequence of chromosome 1 of Nitrosospira multiformis ATCC 25196.</title>
        <authorList>
            <person name="Copeland A."/>
            <person name="Lucas S."/>
            <person name="Lapidus A."/>
            <person name="Barry K."/>
            <person name="Detter J.C."/>
            <person name="Glavina T."/>
            <person name="Hammon N."/>
            <person name="Israni S."/>
            <person name="Pitluck S."/>
            <person name="Chain P."/>
            <person name="Malfatti S."/>
            <person name="Shin M."/>
            <person name="Vergez L."/>
            <person name="Schmutz J."/>
            <person name="Larimer F."/>
            <person name="Land M."/>
            <person name="Hauser L."/>
            <person name="Kyrpides N."/>
            <person name="Lykidis A."/>
            <person name="Richardson P."/>
        </authorList>
    </citation>
    <scope>NUCLEOTIDE SEQUENCE [LARGE SCALE GENOMIC DNA]</scope>
    <source>
        <strain>ATCC 25196 / NCIMB 11849 / C 71</strain>
    </source>
</reference>
<proteinExistence type="inferred from homology"/>
<sequence length="866" mass="97239">MQEKYHPQEIESEAQQYWQQTAAFKAVEAPEKRKYYCLSMFPYPSGKLHMGHVRNYTIGDVLSRYHRMQGYNVLQPMGWDAFGLPAENAAMQNNVPPAKWTYDNIAYMRKQLQSLGLAMDWDRELATCQPDYYRWNQWLFLRMLEKGLAYRTTGIVNWDPVDQTVLANEQVIDGRGWRTGALVEKHEIPMYYMKITAYADELLEALNALPGWPERVRTMQANWIGKSFGVEVRFPADAESGMPQDLKVFTTRADTLFGVTYVAVAAEHPVAQHAAKSNPALAAFIEECRQGAMMEAELATQEKKGRDTGLYVIHPLTGARLPVWIANYVLMGYGEGAVMAVPAHDERDFEFATQYSLPIRAVIKPVDSGLTVPLAQAYVEHGITFDSGEFSGLAFQPAVDAIAVALQQKGLGEKRVHYRLRDWGISRQRYWGCPIPLIYCDACGVVPVPDEQLPVVLPEDLVPDGSGNPLAKTPSFYECSCPRCGQSARRETDTMDTFVDSSWYYIRYACTDQHRAMVDARVDYWLPVDQYIGGIEHAILHLLYSRFWSKVMRDLGLVLFDEPFANLLTQGMVLNEIMFRKTGSGRIVYFNPADVDIQTDEQGRRIGAVLRADGQPVEAGGIGTMSKSRNNGVDPQKLVEQYGADTARLFMMFASPPEQTLEWADAGVEGAFRFLKRLWKQVYDHLQQSGVANGPIPVAGLGPELKALRFQLHQTIAKVGDDLGRRHTFNTAIAAVMELMNALGKLQDSSPSARGLMQEALENIVLLLSPIVPHICHVLWRELRPGTELLDQPWPQADVAALVQDEIELIVQVNGKLRGKIRVAADTKPVIVEQLALENEQVRRFIDGKAVKKVVMVPGKLVNIVI</sequence>
<organism>
    <name type="scientific">Nitrosospira multiformis (strain ATCC 25196 / NCIMB 11849 / C 71)</name>
    <dbReference type="NCBI Taxonomy" id="323848"/>
    <lineage>
        <taxon>Bacteria</taxon>
        <taxon>Pseudomonadati</taxon>
        <taxon>Pseudomonadota</taxon>
        <taxon>Betaproteobacteria</taxon>
        <taxon>Nitrosomonadales</taxon>
        <taxon>Nitrosomonadaceae</taxon>
        <taxon>Nitrosospira</taxon>
    </lineage>
</organism>
<dbReference type="EC" id="6.1.1.4" evidence="1"/>
<dbReference type="EMBL" id="CP000103">
    <property type="protein sequence ID" value="ABB73819.1"/>
    <property type="molecule type" value="Genomic_DNA"/>
</dbReference>
<dbReference type="RefSeq" id="WP_011379873.1">
    <property type="nucleotide sequence ID" value="NC_007614.1"/>
</dbReference>
<dbReference type="SMR" id="Q2YBQ2"/>
<dbReference type="STRING" id="323848.Nmul_A0511"/>
<dbReference type="KEGG" id="nmu:Nmul_A0511"/>
<dbReference type="eggNOG" id="COG0495">
    <property type="taxonomic scope" value="Bacteria"/>
</dbReference>
<dbReference type="HOGENOM" id="CLU_004427_0_0_4"/>
<dbReference type="OrthoDB" id="9810365at2"/>
<dbReference type="Proteomes" id="UP000002718">
    <property type="component" value="Chromosome"/>
</dbReference>
<dbReference type="GO" id="GO:0005829">
    <property type="term" value="C:cytosol"/>
    <property type="evidence" value="ECO:0007669"/>
    <property type="project" value="TreeGrafter"/>
</dbReference>
<dbReference type="GO" id="GO:0002161">
    <property type="term" value="F:aminoacyl-tRNA deacylase activity"/>
    <property type="evidence" value="ECO:0007669"/>
    <property type="project" value="InterPro"/>
</dbReference>
<dbReference type="GO" id="GO:0005524">
    <property type="term" value="F:ATP binding"/>
    <property type="evidence" value="ECO:0007669"/>
    <property type="project" value="UniProtKB-UniRule"/>
</dbReference>
<dbReference type="GO" id="GO:0004823">
    <property type="term" value="F:leucine-tRNA ligase activity"/>
    <property type="evidence" value="ECO:0007669"/>
    <property type="project" value="UniProtKB-UniRule"/>
</dbReference>
<dbReference type="GO" id="GO:0006429">
    <property type="term" value="P:leucyl-tRNA aminoacylation"/>
    <property type="evidence" value="ECO:0007669"/>
    <property type="project" value="UniProtKB-UniRule"/>
</dbReference>
<dbReference type="CDD" id="cd07958">
    <property type="entry name" value="Anticodon_Ia_Leu_BEm"/>
    <property type="match status" value="1"/>
</dbReference>
<dbReference type="CDD" id="cd00812">
    <property type="entry name" value="LeuRS_core"/>
    <property type="match status" value="1"/>
</dbReference>
<dbReference type="FunFam" id="1.10.730.10:FF:000003">
    <property type="entry name" value="Leucine--tRNA ligase"/>
    <property type="match status" value="1"/>
</dbReference>
<dbReference type="FunFam" id="3.10.20.590:FF:000001">
    <property type="entry name" value="Leucine--tRNA ligase"/>
    <property type="match status" value="1"/>
</dbReference>
<dbReference type="FunFam" id="3.40.50.620:FF:000003">
    <property type="entry name" value="Leucine--tRNA ligase"/>
    <property type="match status" value="1"/>
</dbReference>
<dbReference type="FunFam" id="3.40.50.620:FF:000056">
    <property type="entry name" value="Leucine--tRNA ligase"/>
    <property type="match status" value="1"/>
</dbReference>
<dbReference type="FunFam" id="3.90.740.10:FF:000012">
    <property type="entry name" value="Leucine--tRNA ligase"/>
    <property type="match status" value="1"/>
</dbReference>
<dbReference type="Gene3D" id="2.20.28.290">
    <property type="match status" value="1"/>
</dbReference>
<dbReference type="Gene3D" id="3.10.20.590">
    <property type="match status" value="1"/>
</dbReference>
<dbReference type="Gene3D" id="3.40.50.620">
    <property type="entry name" value="HUPs"/>
    <property type="match status" value="2"/>
</dbReference>
<dbReference type="Gene3D" id="1.10.730.10">
    <property type="entry name" value="Isoleucyl-tRNA Synthetase, Domain 1"/>
    <property type="match status" value="1"/>
</dbReference>
<dbReference type="Gene3D" id="3.90.740.10">
    <property type="entry name" value="Valyl/Leucyl/Isoleucyl-tRNA synthetase, editing domain"/>
    <property type="match status" value="1"/>
</dbReference>
<dbReference type="HAMAP" id="MF_00049_B">
    <property type="entry name" value="Leu_tRNA_synth_B"/>
    <property type="match status" value="1"/>
</dbReference>
<dbReference type="InterPro" id="IPR001412">
    <property type="entry name" value="aa-tRNA-synth_I_CS"/>
</dbReference>
<dbReference type="InterPro" id="IPR002300">
    <property type="entry name" value="aa-tRNA-synth_Ia"/>
</dbReference>
<dbReference type="InterPro" id="IPR002302">
    <property type="entry name" value="Leu-tRNA-ligase"/>
</dbReference>
<dbReference type="InterPro" id="IPR025709">
    <property type="entry name" value="Leu_tRNA-synth_edit"/>
</dbReference>
<dbReference type="InterPro" id="IPR013155">
    <property type="entry name" value="M/V/L/I-tRNA-synth_anticd-bd"/>
</dbReference>
<dbReference type="InterPro" id="IPR015413">
    <property type="entry name" value="Methionyl/Leucyl_tRNA_Synth"/>
</dbReference>
<dbReference type="InterPro" id="IPR014729">
    <property type="entry name" value="Rossmann-like_a/b/a_fold"/>
</dbReference>
<dbReference type="InterPro" id="IPR009080">
    <property type="entry name" value="tRNAsynth_Ia_anticodon-bd"/>
</dbReference>
<dbReference type="InterPro" id="IPR009008">
    <property type="entry name" value="Val/Leu/Ile-tRNA-synth_edit"/>
</dbReference>
<dbReference type="NCBIfam" id="TIGR00396">
    <property type="entry name" value="leuS_bact"/>
    <property type="match status" value="1"/>
</dbReference>
<dbReference type="PANTHER" id="PTHR43740:SF2">
    <property type="entry name" value="LEUCINE--TRNA LIGASE, MITOCHONDRIAL"/>
    <property type="match status" value="1"/>
</dbReference>
<dbReference type="PANTHER" id="PTHR43740">
    <property type="entry name" value="LEUCYL-TRNA SYNTHETASE"/>
    <property type="match status" value="1"/>
</dbReference>
<dbReference type="Pfam" id="PF08264">
    <property type="entry name" value="Anticodon_1"/>
    <property type="match status" value="1"/>
</dbReference>
<dbReference type="Pfam" id="PF00133">
    <property type="entry name" value="tRNA-synt_1"/>
    <property type="match status" value="1"/>
</dbReference>
<dbReference type="Pfam" id="PF13603">
    <property type="entry name" value="tRNA-synt_1_2"/>
    <property type="match status" value="1"/>
</dbReference>
<dbReference type="Pfam" id="PF09334">
    <property type="entry name" value="tRNA-synt_1g"/>
    <property type="match status" value="1"/>
</dbReference>
<dbReference type="PRINTS" id="PR00985">
    <property type="entry name" value="TRNASYNTHLEU"/>
</dbReference>
<dbReference type="SUPFAM" id="SSF47323">
    <property type="entry name" value="Anticodon-binding domain of a subclass of class I aminoacyl-tRNA synthetases"/>
    <property type="match status" value="1"/>
</dbReference>
<dbReference type="SUPFAM" id="SSF52374">
    <property type="entry name" value="Nucleotidylyl transferase"/>
    <property type="match status" value="1"/>
</dbReference>
<dbReference type="SUPFAM" id="SSF50677">
    <property type="entry name" value="ValRS/IleRS/LeuRS editing domain"/>
    <property type="match status" value="1"/>
</dbReference>
<dbReference type="PROSITE" id="PS00178">
    <property type="entry name" value="AA_TRNA_LIGASE_I"/>
    <property type="match status" value="1"/>
</dbReference>
<keyword id="KW-0030">Aminoacyl-tRNA synthetase</keyword>
<keyword id="KW-0067">ATP-binding</keyword>
<keyword id="KW-0963">Cytoplasm</keyword>
<keyword id="KW-0436">Ligase</keyword>
<keyword id="KW-0547">Nucleotide-binding</keyword>
<keyword id="KW-0648">Protein biosynthesis</keyword>
<keyword id="KW-1185">Reference proteome</keyword>
<protein>
    <recommendedName>
        <fullName evidence="1">Leucine--tRNA ligase</fullName>
        <ecNumber evidence="1">6.1.1.4</ecNumber>
    </recommendedName>
    <alternativeName>
        <fullName evidence="1">Leucyl-tRNA synthetase</fullName>
        <shortName evidence="1">LeuRS</shortName>
    </alternativeName>
</protein>
<name>SYL_NITMU</name>
<gene>
    <name evidence="1" type="primary">leuS</name>
    <name type="ordered locus">Nmul_A0511</name>
</gene>
<evidence type="ECO:0000255" key="1">
    <source>
        <dbReference type="HAMAP-Rule" id="MF_00049"/>
    </source>
</evidence>
<feature type="chain" id="PRO_1000009380" description="Leucine--tRNA ligase">
    <location>
        <begin position="1"/>
        <end position="866"/>
    </location>
</feature>
<feature type="short sequence motif" description="'HIGH' region">
    <location>
        <begin position="42"/>
        <end position="52"/>
    </location>
</feature>
<feature type="short sequence motif" description="'KMSKS' region">
    <location>
        <begin position="624"/>
        <end position="628"/>
    </location>
</feature>
<feature type="binding site" evidence="1">
    <location>
        <position position="627"/>
    </location>
    <ligand>
        <name>ATP</name>
        <dbReference type="ChEBI" id="CHEBI:30616"/>
    </ligand>
</feature>
<comment type="catalytic activity">
    <reaction evidence="1">
        <text>tRNA(Leu) + L-leucine + ATP = L-leucyl-tRNA(Leu) + AMP + diphosphate</text>
        <dbReference type="Rhea" id="RHEA:11688"/>
        <dbReference type="Rhea" id="RHEA-COMP:9613"/>
        <dbReference type="Rhea" id="RHEA-COMP:9622"/>
        <dbReference type="ChEBI" id="CHEBI:30616"/>
        <dbReference type="ChEBI" id="CHEBI:33019"/>
        <dbReference type="ChEBI" id="CHEBI:57427"/>
        <dbReference type="ChEBI" id="CHEBI:78442"/>
        <dbReference type="ChEBI" id="CHEBI:78494"/>
        <dbReference type="ChEBI" id="CHEBI:456215"/>
        <dbReference type="EC" id="6.1.1.4"/>
    </reaction>
</comment>
<comment type="subcellular location">
    <subcellularLocation>
        <location evidence="1">Cytoplasm</location>
    </subcellularLocation>
</comment>
<comment type="similarity">
    <text evidence="1">Belongs to the class-I aminoacyl-tRNA synthetase family.</text>
</comment>
<accession>Q2YBQ2</accession>